<reference key="1">
    <citation type="journal article" date="2005" name="Toxicon">
        <title>Structural and biological characterization of three novel mastoparan peptides from the venom of the neotropical social wasp Protopolybia exigua (Saussure).</title>
        <authorList>
            <person name="Mendes M.A."/>
            <person name="de Souza B.M."/>
            <person name="Palma M.S."/>
        </authorList>
    </citation>
    <scope>PROTEIN SEQUENCE</scope>
    <scope>FUNCTION</scope>
    <scope>SYNTHESIS</scope>
    <scope>MASS SPECTROMETRY</scope>
    <scope>SUBCELLULAR LOCATION</scope>
    <scope>AMIDATION AT LEU-14</scope>
    <source>
        <tissue>Venom</tissue>
    </source>
</reference>
<feature type="peptide" id="PRO_0000044056" description="Protopolybia-mastoparan-II" evidence="1">
    <location>
        <begin position="1"/>
        <end position="14"/>
    </location>
</feature>
<feature type="modified residue" description="Leucine amide" evidence="1">
    <location>
        <position position="14"/>
    </location>
</feature>
<proteinExistence type="evidence at protein level"/>
<name>MAST2_PROEX</name>
<keyword id="KW-0027">Amidation</keyword>
<keyword id="KW-0903">Direct protein sequencing</keyword>
<keyword id="KW-1213">G-protein coupled receptor impairing toxin</keyword>
<keyword id="KW-0467">Mast cell degranulation</keyword>
<keyword id="KW-0472">Membrane</keyword>
<keyword id="KW-0964">Secreted</keyword>
<keyword id="KW-1052">Target cell membrane</keyword>
<keyword id="KW-1053">Target membrane</keyword>
<keyword id="KW-0800">Toxin</keyword>
<protein>
    <recommendedName>
        <fullName evidence="2">Protopolybia-mastoparan-II</fullName>
        <shortName evidence="3">Protopolybia-MP-II</shortName>
        <shortName evidence="2">Protopolybia-MPII</shortName>
    </recommendedName>
</protein>
<dbReference type="BindingDB" id="P69035"/>
<dbReference type="GO" id="GO:0005576">
    <property type="term" value="C:extracellular region"/>
    <property type="evidence" value="ECO:0007669"/>
    <property type="project" value="UniProtKB-SubCell"/>
</dbReference>
<dbReference type="GO" id="GO:0016020">
    <property type="term" value="C:membrane"/>
    <property type="evidence" value="ECO:0007669"/>
    <property type="project" value="UniProtKB-KW"/>
</dbReference>
<dbReference type="GO" id="GO:0044218">
    <property type="term" value="C:other organism cell membrane"/>
    <property type="evidence" value="ECO:0007669"/>
    <property type="project" value="UniProtKB-KW"/>
</dbReference>
<dbReference type="GO" id="GO:0090729">
    <property type="term" value="F:toxin activity"/>
    <property type="evidence" value="ECO:0007669"/>
    <property type="project" value="UniProtKB-KW"/>
</dbReference>
<accession>P69035</accession>
<sequence>INWKAIIEAAKQAL</sequence>
<evidence type="ECO:0000269" key="1">
    <source>
    </source>
</evidence>
<evidence type="ECO:0000303" key="2">
    <source>
    </source>
</evidence>
<evidence type="ECO:0000305" key="3"/>
<evidence type="ECO:0000305" key="4">
    <source>
    </source>
</evidence>
<comment type="function">
    <text evidence="1">Mast cell degranulating peptide. Activates G proteins (G(i) component), which in turn activates the cascade of molecular events cAMP-regulated, resulting in mast cell degranulation.</text>
</comment>
<comment type="subcellular location">
    <subcellularLocation>
        <location evidence="1">Secreted</location>
    </subcellularLocation>
    <subcellularLocation>
        <location evidence="4">Target cell membrane</location>
    </subcellularLocation>
    <text evidence="4">Assumes an amphipathic alpha-helical conformation in a membrane-like environment.</text>
</comment>
<comment type="tissue specificity">
    <text evidence="4">Expressed by the venom gland.</text>
</comment>
<comment type="mass spectrometry"/>
<comment type="similarity">
    <text evidence="3">Belongs to the MCD family. Mastoparan subfamily.</text>
</comment>
<organism>
    <name type="scientific">Protopolybia exigua</name>
    <name type="common">Neotropical social wasp</name>
    <dbReference type="NCBI Taxonomy" id="91439"/>
    <lineage>
        <taxon>Eukaryota</taxon>
        <taxon>Metazoa</taxon>
        <taxon>Ecdysozoa</taxon>
        <taxon>Arthropoda</taxon>
        <taxon>Hexapoda</taxon>
        <taxon>Insecta</taxon>
        <taxon>Pterygota</taxon>
        <taxon>Neoptera</taxon>
        <taxon>Endopterygota</taxon>
        <taxon>Hymenoptera</taxon>
        <taxon>Apocrita</taxon>
        <taxon>Aculeata</taxon>
        <taxon>Vespoidea</taxon>
        <taxon>Vespidae</taxon>
        <taxon>Polistinae</taxon>
        <taxon>Epiponini</taxon>
        <taxon>Protopolybia</taxon>
    </lineage>
</organism>